<evidence type="ECO:0000250" key="1"/>
<evidence type="ECO:0000255" key="2">
    <source>
        <dbReference type="PROSITE-ProRule" id="PRU00648"/>
    </source>
</evidence>
<evidence type="ECO:0000255" key="3">
    <source>
        <dbReference type="PROSITE-ProRule" id="PRU01004"/>
    </source>
</evidence>
<evidence type="ECO:0000269" key="4">
    <source>
    </source>
</evidence>
<evidence type="ECO:0000305" key="5"/>
<evidence type="ECO:0000305" key="6">
    <source>
    </source>
</evidence>
<name>PCRA_DECAR</name>
<gene>
    <name type="primary">pcrA</name>
    <name type="ordered locus">Daro_2584</name>
</gene>
<sequence>MVQMTRRGFLLASGATLLGSSLSFRTLAAAADLSGAFEYSGWENFHRAQWSWDKKTRGAHLINCTGACPHFVYSKEGVVIREEQSKDIAPMTGIPEYNPRGCNKGECAHDYMYGPHRLKYPLIRVGERGEGKWRRASWDEALDMIADKVVDTIKNHAPDCISVYSPVPAVAPVSFSAGHRFAHYIGAHTHTFFDWYGDHPTGQTQTCGVQGDTAETADWFNSKYIILWGANPTQTRIPDAHFLSEAQLNGTKIVSIAPDFNSSAIKVDKWIHPQPGTDGALALSMAHVIIKEKLYDAHNLKEQTDLSYLVRSDTKRFLREADVVAGGSKDKFYLWDVRTGKPVIPKGCWGDQPEQKAPPVAFMGRNTNTFPKGYIDLGDIDPALEGKFKIQLLDGKSIEVRPVFEILKSRIMADNTPEKAAKITGVPAKSITELAREYATAKPSMIICGGGTQHWYYSDVLLRAMHLLTALTGSEGKNGGGLNHYIGQWKPTFLPGLVALAFPEGPAKQRFCQTTIWTYIHAEVNDQILNSDVDTEKYLREAFASRQMPNLPRDGRDPKVFIIYRGNWLNQAKGQKYVLRNLWPKLELVVDINIRMDSTALYSDVVLPSAHWYEKLDLNVTEEHTFINMTEPAIKPMWESKTDWQIFLALSKRVEMAANRKGYQKFNDEQFKWVRNLSNLWNQMTMDGKLAEDAAAAQYILDNAPHSKGITLDMLREKPQRFKANWTSSMKEGVPYTPFQNFVVDKKPWPTLTGRQQFYLDHETFFDMGVELPVYKAPIDADKYPFRFNSPHSRHSIHSTFKDSVLMLRLQRGGPSIDISSIDAKTLGIKDNDWVEVWNDHGKVICRVKIRSGEQRGRVSMWHTPELYMDLIEGGSQSVCPVRITPTHLVGNYGHLVFRPNYYGPGGTQRDVRVNMKRYIGATPMSF</sequence>
<protein>
    <recommendedName>
        <fullName>Perchlorate reductase subunit alpha</fullName>
        <ecNumber>1.97.1.-</ecNumber>
    </recommendedName>
    <alternativeName>
        <fullName>Perchlorate reductase molybdenum subunit</fullName>
    </alternativeName>
</protein>
<feature type="signal peptide" description="Tat-type signal" evidence="2">
    <location>
        <begin position="1"/>
        <end position="31"/>
    </location>
</feature>
<feature type="chain" id="PRO_5000100109" description="Perchlorate reductase subunit alpha">
    <location>
        <begin position="32"/>
        <end position="927"/>
    </location>
</feature>
<feature type="domain" description="4Fe-4S Mo/W bis-MGD-type" evidence="3">
    <location>
        <begin position="53"/>
        <end position="116"/>
    </location>
</feature>
<feature type="binding site" evidence="3">
    <location>
        <position position="60"/>
    </location>
    <ligand>
        <name>[4Fe-4S] cluster</name>
        <dbReference type="ChEBI" id="CHEBI:49883"/>
    </ligand>
</feature>
<feature type="binding site" evidence="3">
    <location>
        <position position="64"/>
    </location>
    <ligand>
        <name>[4Fe-4S] cluster</name>
        <dbReference type="ChEBI" id="CHEBI:49883"/>
    </ligand>
</feature>
<feature type="binding site" evidence="3">
    <location>
        <position position="68"/>
    </location>
    <ligand>
        <name>[4Fe-4S] cluster</name>
        <dbReference type="ChEBI" id="CHEBI:49883"/>
    </ligand>
</feature>
<feature type="binding site" evidence="3">
    <location>
        <position position="102"/>
    </location>
    <ligand>
        <name>[4Fe-4S] cluster</name>
        <dbReference type="ChEBI" id="CHEBI:49883"/>
    </ligand>
</feature>
<feature type="binding site" evidence="1">
    <location>
        <position position="198"/>
    </location>
    <ligand>
        <name>Mo-bis(molybdopterin guanine dinucleotide)</name>
        <dbReference type="ChEBI" id="CHEBI:60539"/>
    </ligand>
    <ligandPart>
        <name>Mo</name>
        <dbReference type="ChEBI" id="CHEBI:28685"/>
    </ligandPart>
</feature>
<proteinExistence type="evidence at protein level"/>
<comment type="function">
    <text evidence="4">Component of the perchlorate reductase that catalyzes the reduction of perchlorate to chlorite and allows anaerobic growth on perchlorate as the sole electron acceptor. Is probably also able to reduce chlorate to chlorite. The alpha subunit is likely the catalytic subunit.</text>
</comment>
<comment type="cofactor">
    <cofactor evidence="1">
        <name>[4Fe-4S] cluster</name>
        <dbReference type="ChEBI" id="CHEBI:49883"/>
    </cofactor>
    <text evidence="1">Binds 1 [4Fe-4S] cluster.</text>
</comment>
<comment type="cofactor">
    <cofactor evidence="1">
        <name>Mo-bis(molybdopterin guanine dinucleotide)</name>
        <dbReference type="ChEBI" id="CHEBI:60539"/>
    </cofactor>
    <text evidence="1">Binds 1 molybdenum-bis(molybdopterin guanine dinucleotide) (Mo-bis-MGD) cofactor per subunit.</text>
</comment>
<comment type="subunit">
    <text evidence="6">Heterotrimer of alpha, beta and gamma subunits.</text>
</comment>
<comment type="subcellular location">
    <subcellularLocation>
        <location evidence="6">Periplasm</location>
    </subcellularLocation>
</comment>
<comment type="induction">
    <text evidence="4">Transcription of pcrA occurs only under anaerobic (per)chlorate-reducing conditions. The presence of oxygen completely inhibits pcrA expression regardless of the presence of perchlorate, chlorate, or nitrate.</text>
</comment>
<comment type="PTM">
    <text>Predicted to be exported by the Tat system. The position of the signal peptide cleavage has not been experimentally proven.</text>
</comment>
<comment type="disruption phenotype">
    <text evidence="4">Deletion of the pcrA gene abolishes anaerobic growth in both perchlorate and chlorate but not in nitrate, indicating that the pcrABCD genes play a functional role in perchlorate reduction separate from nitrate reduction. Deletion mutant strains are still able to grow aerobically.</text>
</comment>
<comment type="biotechnology">
    <text evidence="4">Has potential use in bioremediation of waste sites contaminated with perchlorate, a common component of solid rocket fuel which is a widespread environmental contaminant in water systems in the United States.</text>
</comment>
<comment type="similarity">
    <text evidence="5">Belongs to the prokaryotic molybdopterin-containing oxidoreductase family.</text>
</comment>
<organism>
    <name type="scientific">Dechloromonas aromatica (strain RCB)</name>
    <dbReference type="NCBI Taxonomy" id="159087"/>
    <lineage>
        <taxon>Bacteria</taxon>
        <taxon>Pseudomonadati</taxon>
        <taxon>Pseudomonadota</taxon>
        <taxon>Betaproteobacteria</taxon>
        <taxon>Rhodocyclales</taxon>
        <taxon>Azonexaceae</taxon>
        <taxon>Dechloromonas</taxon>
    </lineage>
</organism>
<reference key="1">
    <citation type="journal article" date="2009" name="BMC Genomics">
        <title>Metabolic analysis of the soil microbe Dechloromonas aromatica str. RCB: indications of a surprisingly complex life-style and cryptic anaerobic pathways for aromatic degradation.</title>
        <authorList>
            <person name="Salinero K.K."/>
            <person name="Keller K."/>
            <person name="Feil W.S."/>
            <person name="Feil H."/>
            <person name="Trong S."/>
            <person name="Di Bartolo G."/>
            <person name="Lapidus A."/>
        </authorList>
    </citation>
    <scope>NUCLEOTIDE SEQUENCE [LARGE SCALE GENOMIC DNA]</scope>
    <source>
        <strain>RCB</strain>
    </source>
</reference>
<reference key="2">
    <citation type="journal article" date="2005" name="J. Bacteriol.">
        <title>Identification, characterization, and classification of genes encoding perchlorate reductase.</title>
        <authorList>
            <person name="Bender K.S."/>
            <person name="Shang C."/>
            <person name="Chakraborty R."/>
            <person name="Belchik S.M."/>
            <person name="Coates J.D."/>
            <person name="Achenbach L.A."/>
        </authorList>
    </citation>
    <scope>IDENTIFICATION</scope>
    <scope>GENE NAME</scope>
    <scope>FUNCTION</scope>
    <scope>ROLE IN PERCHLORATE REDUCTION</scope>
    <scope>DISRUPTION PHENOTYPE</scope>
    <scope>INDUCTION</scope>
    <scope>SUBCELLULAR LOCATION</scope>
    <scope>SUBUNIT</scope>
    <scope>BIOTECHNOLOGY</scope>
</reference>
<keyword id="KW-0004">4Fe-4S</keyword>
<keyword id="KW-0408">Iron</keyword>
<keyword id="KW-0411">Iron-sulfur</keyword>
<keyword id="KW-0479">Metal-binding</keyword>
<keyword id="KW-0500">Molybdenum</keyword>
<keyword id="KW-0560">Oxidoreductase</keyword>
<keyword id="KW-0574">Periplasm</keyword>
<keyword id="KW-0732">Signal</keyword>
<dbReference type="EC" id="1.97.1.-"/>
<dbReference type="EMBL" id="CP000089">
    <property type="protein sequence ID" value="AAZ47315.1"/>
    <property type="molecule type" value="Genomic_DNA"/>
</dbReference>
<dbReference type="SMR" id="Q47CW6"/>
<dbReference type="STRING" id="159087.Daro_2584"/>
<dbReference type="KEGG" id="dar:Daro_2584"/>
<dbReference type="eggNOG" id="COG5013">
    <property type="taxonomic scope" value="Bacteria"/>
</dbReference>
<dbReference type="HOGENOM" id="CLU_000422_13_3_4"/>
<dbReference type="OrthoDB" id="9815647at2"/>
<dbReference type="GO" id="GO:0016020">
    <property type="term" value="C:membrane"/>
    <property type="evidence" value="ECO:0007669"/>
    <property type="project" value="TreeGrafter"/>
</dbReference>
<dbReference type="GO" id="GO:1990204">
    <property type="term" value="C:oxidoreductase complex"/>
    <property type="evidence" value="ECO:0007669"/>
    <property type="project" value="UniProtKB-ARBA"/>
</dbReference>
<dbReference type="GO" id="GO:0042597">
    <property type="term" value="C:periplasmic space"/>
    <property type="evidence" value="ECO:0007669"/>
    <property type="project" value="UniProtKB-SubCell"/>
</dbReference>
<dbReference type="GO" id="GO:0051539">
    <property type="term" value="F:4 iron, 4 sulfur cluster binding"/>
    <property type="evidence" value="ECO:0007669"/>
    <property type="project" value="UniProtKB-KW"/>
</dbReference>
<dbReference type="GO" id="GO:0046872">
    <property type="term" value="F:metal ion binding"/>
    <property type="evidence" value="ECO:0007669"/>
    <property type="project" value="UniProtKB-KW"/>
</dbReference>
<dbReference type="GO" id="GO:0043546">
    <property type="term" value="F:molybdopterin cofactor binding"/>
    <property type="evidence" value="ECO:0007669"/>
    <property type="project" value="InterPro"/>
</dbReference>
<dbReference type="GO" id="GO:0016491">
    <property type="term" value="F:oxidoreductase activity"/>
    <property type="evidence" value="ECO:0007669"/>
    <property type="project" value="UniProtKB-KW"/>
</dbReference>
<dbReference type="GO" id="GO:0045333">
    <property type="term" value="P:cellular respiration"/>
    <property type="evidence" value="ECO:0007669"/>
    <property type="project" value="UniProtKB-ARBA"/>
</dbReference>
<dbReference type="CDD" id="cd02776">
    <property type="entry name" value="MopB_CT_Nitrate-R-NarG-like"/>
    <property type="match status" value="1"/>
</dbReference>
<dbReference type="CDD" id="cd02750">
    <property type="entry name" value="MopB_Nitrate-R-NarG-like"/>
    <property type="match status" value="1"/>
</dbReference>
<dbReference type="Gene3D" id="3.40.50.12440">
    <property type="match status" value="5"/>
</dbReference>
<dbReference type="InterPro" id="IPR009010">
    <property type="entry name" value="Asp_de-COase-like_dom_sf"/>
</dbReference>
<dbReference type="InterPro" id="IPR017840">
    <property type="entry name" value="DMSO_Rdtase_II_Mopterin_su"/>
</dbReference>
<dbReference type="InterPro" id="IPR037943">
    <property type="entry name" value="MopB_CT_Nitrate-R-NarG-like"/>
</dbReference>
<dbReference type="InterPro" id="IPR006657">
    <property type="entry name" value="MoPterin_dinucl-bd_dom"/>
</dbReference>
<dbReference type="InterPro" id="IPR006656">
    <property type="entry name" value="Mopterin_OxRdtase"/>
</dbReference>
<dbReference type="InterPro" id="IPR006963">
    <property type="entry name" value="Mopterin_OxRdtase_4Fe-4S_dom"/>
</dbReference>
<dbReference type="InterPro" id="IPR050123">
    <property type="entry name" value="Prok_molybdopt-oxidoreductase"/>
</dbReference>
<dbReference type="InterPro" id="IPR006311">
    <property type="entry name" value="TAT_signal"/>
</dbReference>
<dbReference type="NCBIfam" id="TIGR03479">
    <property type="entry name" value="DMSO_red_II_alp"/>
    <property type="match status" value="1"/>
</dbReference>
<dbReference type="PANTHER" id="PTHR43105">
    <property type="entry name" value="RESPIRATORY NITRATE REDUCTASE"/>
    <property type="match status" value="1"/>
</dbReference>
<dbReference type="PANTHER" id="PTHR43105:SF2">
    <property type="entry name" value="RESPIRATORY NITRATE REDUCTASE 2 ALPHA CHAIN"/>
    <property type="match status" value="1"/>
</dbReference>
<dbReference type="Pfam" id="PF00384">
    <property type="entry name" value="Molybdopterin"/>
    <property type="match status" value="1"/>
</dbReference>
<dbReference type="Pfam" id="PF01568">
    <property type="entry name" value="Molydop_binding"/>
    <property type="match status" value="1"/>
</dbReference>
<dbReference type="SUPFAM" id="SSF50692">
    <property type="entry name" value="ADC-like"/>
    <property type="match status" value="1"/>
</dbReference>
<dbReference type="SUPFAM" id="SSF53706">
    <property type="entry name" value="Formate dehydrogenase/DMSO reductase, domains 1-3"/>
    <property type="match status" value="1"/>
</dbReference>
<dbReference type="PROSITE" id="PS51669">
    <property type="entry name" value="4FE4S_MOW_BIS_MGD"/>
    <property type="match status" value="1"/>
</dbReference>
<dbReference type="PROSITE" id="PS51318">
    <property type="entry name" value="TAT"/>
    <property type="match status" value="1"/>
</dbReference>
<accession>Q47CW6</accession>